<gene>
    <name evidence="1" type="primary">sthA</name>
    <name evidence="1" type="synonym">udhA</name>
    <name type="ordered locus">SEN3920</name>
</gene>
<accession>B5QXQ7</accession>
<protein>
    <recommendedName>
        <fullName evidence="1">Soluble pyridine nucleotide transhydrogenase</fullName>
        <shortName evidence="1">STH</shortName>
        <ecNumber evidence="1">1.6.1.1</ecNumber>
    </recommendedName>
    <alternativeName>
        <fullName evidence="1">NAD(P)(+) transhydrogenase [B-specific]</fullName>
    </alternativeName>
</protein>
<feature type="chain" id="PRO_1000100859" description="Soluble pyridine nucleotide transhydrogenase">
    <location>
        <begin position="1"/>
        <end position="466"/>
    </location>
</feature>
<feature type="binding site" evidence="1">
    <location>
        <begin position="36"/>
        <end position="45"/>
    </location>
    <ligand>
        <name>FAD</name>
        <dbReference type="ChEBI" id="CHEBI:57692"/>
    </ligand>
</feature>
<organism>
    <name type="scientific">Salmonella enteritidis PT4 (strain P125109)</name>
    <dbReference type="NCBI Taxonomy" id="550537"/>
    <lineage>
        <taxon>Bacteria</taxon>
        <taxon>Pseudomonadati</taxon>
        <taxon>Pseudomonadota</taxon>
        <taxon>Gammaproteobacteria</taxon>
        <taxon>Enterobacterales</taxon>
        <taxon>Enterobacteriaceae</taxon>
        <taxon>Salmonella</taxon>
    </lineage>
</organism>
<keyword id="KW-0963">Cytoplasm</keyword>
<keyword id="KW-0274">FAD</keyword>
<keyword id="KW-0285">Flavoprotein</keyword>
<keyword id="KW-0520">NAD</keyword>
<keyword id="KW-0521">NADP</keyword>
<keyword id="KW-0560">Oxidoreductase</keyword>
<dbReference type="EC" id="1.6.1.1" evidence="1"/>
<dbReference type="EMBL" id="AM933172">
    <property type="protein sequence ID" value="CAR35492.1"/>
    <property type="molecule type" value="Genomic_DNA"/>
</dbReference>
<dbReference type="RefSeq" id="WP_001120789.1">
    <property type="nucleotide sequence ID" value="NC_011294.1"/>
</dbReference>
<dbReference type="SMR" id="B5QXQ7"/>
<dbReference type="GeneID" id="66758375"/>
<dbReference type="KEGG" id="set:SEN3920"/>
<dbReference type="HOGENOM" id="CLU_016755_0_0_6"/>
<dbReference type="Proteomes" id="UP000000613">
    <property type="component" value="Chromosome"/>
</dbReference>
<dbReference type="GO" id="GO:0005829">
    <property type="term" value="C:cytosol"/>
    <property type="evidence" value="ECO:0007669"/>
    <property type="project" value="TreeGrafter"/>
</dbReference>
<dbReference type="GO" id="GO:0004148">
    <property type="term" value="F:dihydrolipoyl dehydrogenase (NADH) activity"/>
    <property type="evidence" value="ECO:0007669"/>
    <property type="project" value="TreeGrafter"/>
</dbReference>
<dbReference type="GO" id="GO:0050660">
    <property type="term" value="F:flavin adenine dinucleotide binding"/>
    <property type="evidence" value="ECO:0007669"/>
    <property type="project" value="TreeGrafter"/>
</dbReference>
<dbReference type="GO" id="GO:0003957">
    <property type="term" value="F:NAD(P)+ transhydrogenase (Si-specific) activity"/>
    <property type="evidence" value="ECO:0007669"/>
    <property type="project" value="UniProtKB-UniRule"/>
</dbReference>
<dbReference type="GO" id="GO:0006103">
    <property type="term" value="P:2-oxoglutarate metabolic process"/>
    <property type="evidence" value="ECO:0007669"/>
    <property type="project" value="TreeGrafter"/>
</dbReference>
<dbReference type="GO" id="GO:0006739">
    <property type="term" value="P:NADP metabolic process"/>
    <property type="evidence" value="ECO:0007669"/>
    <property type="project" value="UniProtKB-UniRule"/>
</dbReference>
<dbReference type="FunFam" id="3.30.390.30:FF:000002">
    <property type="entry name" value="Soluble pyridine nucleotide transhydrogenase"/>
    <property type="match status" value="1"/>
</dbReference>
<dbReference type="FunFam" id="3.50.50.60:FF:000008">
    <property type="entry name" value="Soluble pyridine nucleotide transhydrogenase"/>
    <property type="match status" value="1"/>
</dbReference>
<dbReference type="Gene3D" id="3.30.390.30">
    <property type="match status" value="1"/>
</dbReference>
<dbReference type="Gene3D" id="3.50.50.60">
    <property type="entry name" value="FAD/NAD(P)-binding domain"/>
    <property type="match status" value="2"/>
</dbReference>
<dbReference type="HAMAP" id="MF_00247">
    <property type="entry name" value="SthA"/>
    <property type="match status" value="1"/>
</dbReference>
<dbReference type="InterPro" id="IPR050151">
    <property type="entry name" value="Class-I_Pyr_Nuc-Dis_Oxidored"/>
</dbReference>
<dbReference type="InterPro" id="IPR036188">
    <property type="entry name" value="FAD/NAD-bd_sf"/>
</dbReference>
<dbReference type="InterPro" id="IPR023753">
    <property type="entry name" value="FAD/NAD-binding_dom"/>
</dbReference>
<dbReference type="InterPro" id="IPR016156">
    <property type="entry name" value="FAD/NAD-linked_Rdtase_dimer_sf"/>
</dbReference>
<dbReference type="InterPro" id="IPR001100">
    <property type="entry name" value="Pyr_nuc-diS_OxRdtase"/>
</dbReference>
<dbReference type="InterPro" id="IPR004099">
    <property type="entry name" value="Pyr_nucl-diS_OxRdtase_dimer"/>
</dbReference>
<dbReference type="InterPro" id="IPR022962">
    <property type="entry name" value="STH_gammaproteobact"/>
</dbReference>
<dbReference type="NCBIfam" id="NF003585">
    <property type="entry name" value="PRK05249.1"/>
    <property type="match status" value="1"/>
</dbReference>
<dbReference type="PANTHER" id="PTHR22912">
    <property type="entry name" value="DISULFIDE OXIDOREDUCTASE"/>
    <property type="match status" value="1"/>
</dbReference>
<dbReference type="PANTHER" id="PTHR22912:SF93">
    <property type="entry name" value="SOLUBLE PYRIDINE NUCLEOTIDE TRANSHYDROGENASE"/>
    <property type="match status" value="1"/>
</dbReference>
<dbReference type="Pfam" id="PF07992">
    <property type="entry name" value="Pyr_redox_2"/>
    <property type="match status" value="1"/>
</dbReference>
<dbReference type="Pfam" id="PF02852">
    <property type="entry name" value="Pyr_redox_dim"/>
    <property type="match status" value="1"/>
</dbReference>
<dbReference type="PIRSF" id="PIRSF000350">
    <property type="entry name" value="Mercury_reductase_MerA"/>
    <property type="match status" value="1"/>
</dbReference>
<dbReference type="PRINTS" id="PR00368">
    <property type="entry name" value="FADPNR"/>
</dbReference>
<dbReference type="PRINTS" id="PR00411">
    <property type="entry name" value="PNDRDTASEI"/>
</dbReference>
<dbReference type="SUPFAM" id="SSF51905">
    <property type="entry name" value="FAD/NAD(P)-binding domain"/>
    <property type="match status" value="1"/>
</dbReference>
<dbReference type="SUPFAM" id="SSF55424">
    <property type="entry name" value="FAD/NAD-linked reductases, dimerisation (C-terminal) domain"/>
    <property type="match status" value="1"/>
</dbReference>
<proteinExistence type="inferred from homology"/>
<sequence length="466" mass="51608">MPHSWDYDAVVIGSGPGGEGAAMGLVKQGARVAVIERYHNVGGGCTHWGTIPSKALRHAVSRIIEFNQNPLYSDHSRLLRSSFADILNHADNVINQQTRMRQGFYERNHCEILQGNAHFIDEHTLALECHDGTVETLTAEKFVIACGSRPYHPNDVDFSHPRIYDSDSILSLHHEPRHVIIYGAGVIGCEYASIFRGMDVKVDLINTRDRLLAFLDQEMSDSLSYHFWNSGVVIRHNEEYEKIEGCDDGVIMHLKSGKKLKADCLLYANGRTGNTDSLALENIGLETDSRGQLKVNSMYQTALPHVYAVGDVIGYPSLASAAYDQGRIAAQALVKGEATAHLIEDIPTGIYTIPEISSVGKTEQQLTAMKVPYEVGRAQFKHLARAQIVGMNVGTLKILFHRETKEILGIHCFGERAAEIIHIGQAIMEQKGGGNTIEYFVNTTFNYPTMAEAYRVAALNGLNRLF</sequence>
<evidence type="ECO:0000255" key="1">
    <source>
        <dbReference type="HAMAP-Rule" id="MF_00247"/>
    </source>
</evidence>
<comment type="function">
    <text evidence="1">Conversion of NADPH, generated by peripheral catabolic pathways, to NADH, which can enter the respiratory chain for energy generation.</text>
</comment>
<comment type="catalytic activity">
    <reaction evidence="1">
        <text>NAD(+) + NADPH = NADH + NADP(+)</text>
        <dbReference type="Rhea" id="RHEA:11692"/>
        <dbReference type="ChEBI" id="CHEBI:57540"/>
        <dbReference type="ChEBI" id="CHEBI:57783"/>
        <dbReference type="ChEBI" id="CHEBI:57945"/>
        <dbReference type="ChEBI" id="CHEBI:58349"/>
        <dbReference type="EC" id="1.6.1.1"/>
    </reaction>
</comment>
<comment type="cofactor">
    <cofactor evidence="1">
        <name>FAD</name>
        <dbReference type="ChEBI" id="CHEBI:57692"/>
    </cofactor>
    <text evidence="1">Binds 1 FAD per subunit.</text>
</comment>
<comment type="subcellular location">
    <subcellularLocation>
        <location evidence="1">Cytoplasm</location>
    </subcellularLocation>
</comment>
<comment type="similarity">
    <text evidence="1">Belongs to the class-I pyridine nucleotide-disulfide oxidoreductase family.</text>
</comment>
<reference key="1">
    <citation type="journal article" date="2008" name="Genome Res.">
        <title>Comparative genome analysis of Salmonella enteritidis PT4 and Salmonella gallinarum 287/91 provides insights into evolutionary and host adaptation pathways.</title>
        <authorList>
            <person name="Thomson N.R."/>
            <person name="Clayton D.J."/>
            <person name="Windhorst D."/>
            <person name="Vernikos G."/>
            <person name="Davidson S."/>
            <person name="Churcher C."/>
            <person name="Quail M.A."/>
            <person name="Stevens M."/>
            <person name="Jones M.A."/>
            <person name="Watson M."/>
            <person name="Barron A."/>
            <person name="Layton A."/>
            <person name="Pickard D."/>
            <person name="Kingsley R.A."/>
            <person name="Bignell A."/>
            <person name="Clark L."/>
            <person name="Harris B."/>
            <person name="Ormond D."/>
            <person name="Abdellah Z."/>
            <person name="Brooks K."/>
            <person name="Cherevach I."/>
            <person name="Chillingworth T."/>
            <person name="Woodward J."/>
            <person name="Norberczak H."/>
            <person name="Lord A."/>
            <person name="Arrowsmith C."/>
            <person name="Jagels K."/>
            <person name="Moule S."/>
            <person name="Mungall K."/>
            <person name="Saunders M."/>
            <person name="Whitehead S."/>
            <person name="Chabalgoity J.A."/>
            <person name="Maskell D."/>
            <person name="Humphreys T."/>
            <person name="Roberts M."/>
            <person name="Barrow P.A."/>
            <person name="Dougan G."/>
            <person name="Parkhill J."/>
        </authorList>
    </citation>
    <scope>NUCLEOTIDE SEQUENCE [LARGE SCALE GENOMIC DNA]</scope>
    <source>
        <strain>P125109</strain>
    </source>
</reference>
<name>STHA_SALEP</name>